<protein>
    <recommendedName>
        <fullName>Major latex protein 146</fullName>
        <shortName>MLP 146</shortName>
    </recommendedName>
</protein>
<keyword id="KW-0968">Cytoplasmic vesicle</keyword>
<keyword id="KW-0926">Vacuole</keyword>
<reference key="1">
    <citation type="journal article" date="1994" name="Gene">
        <title>Sequence analysis of two new members of the major latex protein gene family supports the triploid-hybrid origin of the opium poppy.</title>
        <authorList>
            <person name="Nessler C.L."/>
        </authorList>
    </citation>
    <scope>NUCLEOTIDE SEQUENCE</scope>
    <source>
        <strain>cv. UNL186</strain>
    </source>
</reference>
<proteinExistence type="evidence at transcript level"/>
<evidence type="ECO:0000305" key="1"/>
<sequence>MAHTHCISGLVGKLVMESEVNCNADKYYKLYKHHEDLPSVIPHIYTSVKAVEGHGTTSGCVKEWGYILEGKPLSCKEKTTYNDETRTIHHMVVAGDLMNDYKKFDATLVVNPKSNGHGCIVKWTIDYEKMNEDSPVPFGYLACYQQITEDLSSHLCASD</sequence>
<name>ML146_PAPSO</name>
<feature type="chain" id="PRO_0000210066" description="Major latex protein 146">
    <location>
        <begin position="1"/>
        <end position="159"/>
    </location>
</feature>
<accession>Q06394</accession>
<organism>
    <name type="scientific">Papaver somniferum</name>
    <name type="common">Opium poppy</name>
    <dbReference type="NCBI Taxonomy" id="3469"/>
    <lineage>
        <taxon>Eukaryota</taxon>
        <taxon>Viridiplantae</taxon>
        <taxon>Streptophyta</taxon>
        <taxon>Embryophyta</taxon>
        <taxon>Tracheophyta</taxon>
        <taxon>Spermatophyta</taxon>
        <taxon>Magnoliopsida</taxon>
        <taxon>Ranunculales</taxon>
        <taxon>Papaveraceae</taxon>
        <taxon>Papaveroideae</taxon>
        <taxon>Papaver</taxon>
    </lineage>
</organism>
<comment type="function">
    <text>Not known; MLPs constitute up to 50% of the soluble latex protein.</text>
</comment>
<comment type="subcellular location">
    <subcellularLocation>
        <location>Vacuole</location>
    </subcellularLocation>
    <subcellularLocation>
        <location>Cytoplasmic vesicle</location>
    </subcellularLocation>
    <text>Central vacuole of developing laticifers and membrane-bound vesicles of mature cells.</text>
</comment>
<comment type="tissue specificity">
    <text>Laticifer.</text>
</comment>
<comment type="developmental stage">
    <text>MLPs accumulate early in laticifer development and persist through maturity.</text>
</comment>
<comment type="similarity">
    <text evidence="1">Belongs to the MLP family.</text>
</comment>
<dbReference type="EMBL" id="L06467">
    <property type="protein sequence ID" value="AAA19244.1"/>
    <property type="molecule type" value="Unassigned_DNA"/>
</dbReference>
<dbReference type="PIR" id="T09697">
    <property type="entry name" value="T09697"/>
</dbReference>
<dbReference type="SMR" id="Q06394"/>
<dbReference type="GO" id="GO:0031410">
    <property type="term" value="C:cytoplasmic vesicle"/>
    <property type="evidence" value="ECO:0007669"/>
    <property type="project" value="UniProtKB-KW"/>
</dbReference>
<dbReference type="GO" id="GO:0005773">
    <property type="term" value="C:vacuole"/>
    <property type="evidence" value="ECO:0007669"/>
    <property type="project" value="UniProtKB-SubCell"/>
</dbReference>
<dbReference type="GO" id="GO:0006952">
    <property type="term" value="P:defense response"/>
    <property type="evidence" value="ECO:0007669"/>
    <property type="project" value="InterPro"/>
</dbReference>
<dbReference type="CDD" id="cd07816">
    <property type="entry name" value="Bet_v1-like"/>
    <property type="match status" value="1"/>
</dbReference>
<dbReference type="Gene3D" id="3.30.530.20">
    <property type="match status" value="1"/>
</dbReference>
<dbReference type="InterPro" id="IPR000916">
    <property type="entry name" value="Bet_v_I/MLP"/>
</dbReference>
<dbReference type="InterPro" id="IPR052006">
    <property type="entry name" value="MLP-like"/>
</dbReference>
<dbReference type="InterPro" id="IPR023393">
    <property type="entry name" value="START-like_dom_sf"/>
</dbReference>
<dbReference type="PANTHER" id="PTHR31338">
    <property type="entry name" value="POLYKETIDE CYCLASE/DEHYDRASE AND LIPID TRANSPORT SUPERFAMILY PROTEIN"/>
    <property type="match status" value="1"/>
</dbReference>
<dbReference type="PANTHER" id="PTHR31338:SF16">
    <property type="entry name" value="POLYKETIDE CYCLASE_DEHYDRASE AND LIPID TRANSPORT SUPERFAMILY PROTEIN"/>
    <property type="match status" value="1"/>
</dbReference>
<dbReference type="Pfam" id="PF00407">
    <property type="entry name" value="Bet_v_1"/>
    <property type="match status" value="1"/>
</dbReference>
<dbReference type="SMART" id="SM01037">
    <property type="entry name" value="Bet_v_1"/>
    <property type="match status" value="1"/>
</dbReference>
<dbReference type="SUPFAM" id="SSF55961">
    <property type="entry name" value="Bet v1-like"/>
    <property type="match status" value="1"/>
</dbReference>
<gene>
    <name type="primary">MLP146</name>
</gene>